<keyword id="KW-0963">Cytoplasm</keyword>
<keyword id="KW-0489">Methyltransferase</keyword>
<keyword id="KW-1185">Reference proteome</keyword>
<keyword id="KW-0698">rRNA processing</keyword>
<keyword id="KW-0949">S-adenosyl-L-methionine</keyword>
<keyword id="KW-0808">Transferase</keyword>
<comment type="function">
    <text evidence="1">Specifically methylates the N7 position of guanine in position 518 of 16S rRNA.</text>
</comment>
<comment type="subcellular location">
    <subcellularLocation>
        <location evidence="1">Cytoplasm</location>
    </subcellularLocation>
</comment>
<comment type="similarity">
    <text evidence="1">Belongs to the methyltransferase superfamily. RNA methyltransferase RsmG family.</text>
</comment>
<sequence>MTQPLDDAASAIFGPRLELAQRYADWLATAGVERGLLGPREVDRLWERHVLNSAVIGELLDQGERVVDIGSGAGLPGLPLAIARPDLQVVLLEPMLRRVEFLQEVVTDLGLAVEVVRGRAEERSVRERLGGSDAAVSRAVAALDKLTKWSMPLLKREGRMLAIKGERAPDEVREHRRVMESLGAADVRVVPCGANYLQPPATVVVARRGDTRGPNRRVSPRRTGGAPA</sequence>
<reference key="1">
    <citation type="journal article" date="2008" name="Genome Res.">
        <title>Insights from the complete genome sequence of Mycobacterium marinum on the evolution of Mycobacterium tuberculosis.</title>
        <authorList>
            <person name="Stinear T.P."/>
            <person name="Seemann T."/>
            <person name="Harrison P.F."/>
            <person name="Jenkin G.A."/>
            <person name="Davies J.K."/>
            <person name="Johnson P.D."/>
            <person name="Abdellah Z."/>
            <person name="Arrowsmith C."/>
            <person name="Chillingworth T."/>
            <person name="Churcher C."/>
            <person name="Clarke K."/>
            <person name="Cronin A."/>
            <person name="Davis P."/>
            <person name="Goodhead I."/>
            <person name="Holroyd N."/>
            <person name="Jagels K."/>
            <person name="Lord A."/>
            <person name="Moule S."/>
            <person name="Mungall K."/>
            <person name="Norbertczak H."/>
            <person name="Quail M.A."/>
            <person name="Rabbinowitsch E."/>
            <person name="Walker D."/>
            <person name="White B."/>
            <person name="Whitehead S."/>
            <person name="Small P.L."/>
            <person name="Brosch R."/>
            <person name="Ramakrishnan L."/>
            <person name="Fischbach M.A."/>
            <person name="Parkhill J."/>
            <person name="Cole S.T."/>
        </authorList>
    </citation>
    <scope>NUCLEOTIDE SEQUENCE [LARGE SCALE GENOMIC DNA]</scope>
    <source>
        <strain>ATCC BAA-535 / M</strain>
    </source>
</reference>
<gene>
    <name evidence="1" type="primary">rsmG</name>
    <name type="ordered locus">MMAR_5483</name>
</gene>
<protein>
    <recommendedName>
        <fullName evidence="1">Ribosomal RNA small subunit methyltransferase G</fullName>
        <ecNumber evidence="1">2.1.1.-</ecNumber>
    </recommendedName>
    <alternativeName>
        <fullName evidence="1">16S rRNA 7-methylguanosine methyltransferase</fullName>
        <shortName evidence="1">16S rRNA m7G methyltransferase</shortName>
    </alternativeName>
</protein>
<name>RSMG_MYCMM</name>
<feature type="chain" id="PRO_1000092639" description="Ribosomal RNA small subunit methyltransferase G">
    <location>
        <begin position="1"/>
        <end position="228"/>
    </location>
</feature>
<feature type="region of interest" description="Disordered" evidence="2">
    <location>
        <begin position="207"/>
        <end position="228"/>
    </location>
</feature>
<feature type="binding site" evidence="1">
    <location>
        <position position="70"/>
    </location>
    <ligand>
        <name>S-adenosyl-L-methionine</name>
        <dbReference type="ChEBI" id="CHEBI:59789"/>
    </ligand>
</feature>
<feature type="binding site" evidence="1">
    <location>
        <position position="75"/>
    </location>
    <ligand>
        <name>S-adenosyl-L-methionine</name>
        <dbReference type="ChEBI" id="CHEBI:59789"/>
    </ligand>
</feature>
<feature type="binding site" evidence="1">
    <location>
        <begin position="120"/>
        <end position="121"/>
    </location>
    <ligand>
        <name>S-adenosyl-L-methionine</name>
        <dbReference type="ChEBI" id="CHEBI:59789"/>
    </ligand>
</feature>
<feature type="binding site" evidence="1">
    <location>
        <position position="138"/>
    </location>
    <ligand>
        <name>S-adenosyl-L-methionine</name>
        <dbReference type="ChEBI" id="CHEBI:59789"/>
    </ligand>
</feature>
<organism>
    <name type="scientific">Mycobacterium marinum (strain ATCC BAA-535 / M)</name>
    <dbReference type="NCBI Taxonomy" id="216594"/>
    <lineage>
        <taxon>Bacteria</taxon>
        <taxon>Bacillati</taxon>
        <taxon>Actinomycetota</taxon>
        <taxon>Actinomycetes</taxon>
        <taxon>Mycobacteriales</taxon>
        <taxon>Mycobacteriaceae</taxon>
        <taxon>Mycobacterium</taxon>
        <taxon>Mycobacterium ulcerans group</taxon>
    </lineage>
</organism>
<dbReference type="EC" id="2.1.1.-" evidence="1"/>
<dbReference type="EMBL" id="CP000854">
    <property type="protein sequence ID" value="ACC43889.1"/>
    <property type="molecule type" value="Genomic_DNA"/>
</dbReference>
<dbReference type="RefSeq" id="WP_012396981.1">
    <property type="nucleotide sequence ID" value="NC_010612.1"/>
</dbReference>
<dbReference type="SMR" id="B2HNT4"/>
<dbReference type="STRING" id="216594.MMAR_5483"/>
<dbReference type="KEGG" id="mmi:MMAR_5483"/>
<dbReference type="eggNOG" id="COG0357">
    <property type="taxonomic scope" value="Bacteria"/>
</dbReference>
<dbReference type="HOGENOM" id="CLU_065341_5_0_11"/>
<dbReference type="OrthoDB" id="9808773at2"/>
<dbReference type="Proteomes" id="UP000001190">
    <property type="component" value="Chromosome"/>
</dbReference>
<dbReference type="GO" id="GO:0005829">
    <property type="term" value="C:cytosol"/>
    <property type="evidence" value="ECO:0007669"/>
    <property type="project" value="TreeGrafter"/>
</dbReference>
<dbReference type="GO" id="GO:0070043">
    <property type="term" value="F:rRNA (guanine-N7-)-methyltransferase activity"/>
    <property type="evidence" value="ECO:0007669"/>
    <property type="project" value="UniProtKB-UniRule"/>
</dbReference>
<dbReference type="Gene3D" id="3.40.50.150">
    <property type="entry name" value="Vaccinia Virus protein VP39"/>
    <property type="match status" value="1"/>
</dbReference>
<dbReference type="HAMAP" id="MF_00074">
    <property type="entry name" value="16SrRNA_methyltr_G"/>
    <property type="match status" value="1"/>
</dbReference>
<dbReference type="InterPro" id="IPR003682">
    <property type="entry name" value="rRNA_ssu_MeTfrase_G"/>
</dbReference>
<dbReference type="InterPro" id="IPR029063">
    <property type="entry name" value="SAM-dependent_MTases_sf"/>
</dbReference>
<dbReference type="NCBIfam" id="TIGR00138">
    <property type="entry name" value="rsmG_gidB"/>
    <property type="match status" value="1"/>
</dbReference>
<dbReference type="PANTHER" id="PTHR31760">
    <property type="entry name" value="S-ADENOSYL-L-METHIONINE-DEPENDENT METHYLTRANSFERASES SUPERFAMILY PROTEIN"/>
    <property type="match status" value="1"/>
</dbReference>
<dbReference type="PANTHER" id="PTHR31760:SF0">
    <property type="entry name" value="S-ADENOSYL-L-METHIONINE-DEPENDENT METHYLTRANSFERASES SUPERFAMILY PROTEIN"/>
    <property type="match status" value="1"/>
</dbReference>
<dbReference type="Pfam" id="PF02527">
    <property type="entry name" value="GidB"/>
    <property type="match status" value="1"/>
</dbReference>
<dbReference type="PIRSF" id="PIRSF003078">
    <property type="entry name" value="GidB"/>
    <property type="match status" value="1"/>
</dbReference>
<dbReference type="SUPFAM" id="SSF53335">
    <property type="entry name" value="S-adenosyl-L-methionine-dependent methyltransferases"/>
    <property type="match status" value="1"/>
</dbReference>
<proteinExistence type="inferred from homology"/>
<accession>B2HNT4</accession>
<evidence type="ECO:0000255" key="1">
    <source>
        <dbReference type="HAMAP-Rule" id="MF_00074"/>
    </source>
</evidence>
<evidence type="ECO:0000256" key="2">
    <source>
        <dbReference type="SAM" id="MobiDB-lite"/>
    </source>
</evidence>